<feature type="chain" id="PRO_0000252193" description="UPF0387 membrane protein YohO">
    <location>
        <begin position="1"/>
        <end position="35"/>
    </location>
</feature>
<feature type="transmembrane region" description="Helical" evidence="1">
    <location>
        <begin position="6"/>
        <end position="26"/>
    </location>
</feature>
<dbReference type="EMBL" id="U00096">
    <property type="protein sequence ID" value="ABD18688.1"/>
    <property type="molecule type" value="Genomic_DNA"/>
</dbReference>
<dbReference type="EMBL" id="AP009048">
    <property type="protein sequence ID" value="BAE76604.1"/>
    <property type="molecule type" value="Genomic_DNA"/>
</dbReference>
<dbReference type="RefSeq" id="WP_001216963.1">
    <property type="nucleotide sequence ID" value="NZ_STEB01000002.1"/>
</dbReference>
<dbReference type="RefSeq" id="YP_588460.1">
    <property type="nucleotide sequence ID" value="NC_000913.3"/>
</dbReference>
<dbReference type="BioGRID" id="4260446">
    <property type="interactions" value="7"/>
</dbReference>
<dbReference type="FunCoup" id="Q2EES6">
    <property type="interactions" value="93"/>
</dbReference>
<dbReference type="STRING" id="511145.b4542"/>
<dbReference type="PaxDb" id="511145-b4542"/>
<dbReference type="EnsemblBacteria" id="ABD18688">
    <property type="protein sequence ID" value="ABD18688"/>
    <property type="gene ID" value="b4542"/>
</dbReference>
<dbReference type="GeneID" id="1450279"/>
<dbReference type="KEGG" id="ecj:JW5354"/>
<dbReference type="KEGG" id="eco:b4542"/>
<dbReference type="KEGG" id="ecoc:C3026_11930"/>
<dbReference type="PATRIC" id="fig|511145.12.peg.2207"/>
<dbReference type="eggNOG" id="ENOG5032NBR">
    <property type="taxonomic scope" value="Bacteria"/>
</dbReference>
<dbReference type="HOGENOM" id="CLU_220259_0_0_6"/>
<dbReference type="InParanoid" id="Q2EES6"/>
<dbReference type="OrthoDB" id="6548946at2"/>
<dbReference type="PhylomeDB" id="Q2EES6"/>
<dbReference type="BioCyc" id="EcoCyc:MONOMER0-2681"/>
<dbReference type="PRO" id="PR:Q2EES6"/>
<dbReference type="Proteomes" id="UP000000625">
    <property type="component" value="Chromosome"/>
</dbReference>
<dbReference type="GO" id="GO:0005886">
    <property type="term" value="C:plasma membrane"/>
    <property type="evidence" value="ECO:0007669"/>
    <property type="project" value="UniProtKB-SubCell"/>
</dbReference>
<dbReference type="HAMAP" id="MF_01362">
    <property type="entry name" value="UPF0387"/>
    <property type="match status" value="1"/>
</dbReference>
<dbReference type="InterPro" id="IPR020870">
    <property type="entry name" value="UPF0387_membrane"/>
</dbReference>
<dbReference type="NCBIfam" id="NF010225">
    <property type="entry name" value="PRK13681.1"/>
    <property type="match status" value="1"/>
</dbReference>
<protein>
    <recommendedName>
        <fullName evidence="1">UPF0387 membrane protein YohO</fullName>
    </recommendedName>
</protein>
<sequence length="35" mass="3643">MRIAKIGVIALFLFMALGGIGGVMLAGYTFILRAG</sequence>
<reference key="1">
    <citation type="journal article" date="1997" name="Science">
        <title>The complete genome sequence of Escherichia coli K-12.</title>
        <authorList>
            <person name="Blattner F.R."/>
            <person name="Plunkett G. III"/>
            <person name="Bloch C.A."/>
            <person name="Perna N.T."/>
            <person name="Burland V."/>
            <person name="Riley M."/>
            <person name="Collado-Vides J."/>
            <person name="Glasner J.D."/>
            <person name="Rode C.K."/>
            <person name="Mayhew G.F."/>
            <person name="Gregor J."/>
            <person name="Davis N.W."/>
            <person name="Kirkpatrick H.A."/>
            <person name="Goeden M.A."/>
            <person name="Rose D.J."/>
            <person name="Mau B."/>
            <person name="Shao Y."/>
        </authorList>
    </citation>
    <scope>NUCLEOTIDE SEQUENCE [LARGE SCALE GENOMIC DNA]</scope>
    <source>
        <strain>K12 / MG1655 / ATCC 47076</strain>
    </source>
</reference>
<reference key="2">
    <citation type="journal article" date="2006" name="Mol. Syst. Biol.">
        <title>Highly accurate genome sequences of Escherichia coli K-12 strains MG1655 and W3110.</title>
        <authorList>
            <person name="Hayashi K."/>
            <person name="Morooka N."/>
            <person name="Yamamoto Y."/>
            <person name="Fujita K."/>
            <person name="Isono K."/>
            <person name="Choi S."/>
            <person name="Ohtsubo E."/>
            <person name="Baba T."/>
            <person name="Wanner B.L."/>
            <person name="Mori H."/>
            <person name="Horiuchi T."/>
        </authorList>
    </citation>
    <scope>NUCLEOTIDE SEQUENCE [LARGE SCALE GENOMIC DNA]</scope>
    <source>
        <strain>K12 / W3110 / ATCC 27325 / DSM 5911</strain>
    </source>
</reference>
<reference key="3">
    <citation type="journal article" date="2008" name="Mol. Microbiol.">
        <title>Small membrane proteins found by comparative genomics and ribosome binding site models.</title>
        <authorList>
            <person name="Hemm M.R."/>
            <person name="Paul B.J."/>
            <person name="Schneider T.D."/>
            <person name="Storz G."/>
            <person name="Rudd K.E."/>
        </authorList>
    </citation>
    <scope>INDUCTION</scope>
    <source>
        <strain>K12 / MG1655 / ATCC 47076</strain>
    </source>
</reference>
<reference key="4">
    <citation type="journal article" date="2010" name="J. Bacteriol.">
        <title>Small stress response proteins in Escherichia coli: proteins missed by classical proteomic studies.</title>
        <authorList>
            <person name="Hemm M.R."/>
            <person name="Paul B.J."/>
            <person name="Miranda-Rios J."/>
            <person name="Zhang A."/>
            <person name="Soltanzad N."/>
            <person name="Storz G."/>
        </authorList>
    </citation>
    <scope>INDUCTION</scope>
    <source>
        <strain>K12 / MG1655 / ATCC 47076</strain>
    </source>
</reference>
<keyword id="KW-0997">Cell inner membrane</keyword>
<keyword id="KW-1003">Cell membrane</keyword>
<keyword id="KW-0472">Membrane</keyword>
<keyword id="KW-1185">Reference proteome</keyword>
<keyword id="KW-0346">Stress response</keyword>
<keyword id="KW-0812">Transmembrane</keyword>
<keyword id="KW-1133">Transmembrane helix</keyword>
<organism>
    <name type="scientific">Escherichia coli (strain K12)</name>
    <dbReference type="NCBI Taxonomy" id="83333"/>
    <lineage>
        <taxon>Bacteria</taxon>
        <taxon>Pseudomonadati</taxon>
        <taxon>Pseudomonadota</taxon>
        <taxon>Gammaproteobacteria</taxon>
        <taxon>Enterobacterales</taxon>
        <taxon>Enterobacteriaceae</taxon>
        <taxon>Escherichia</taxon>
    </lineage>
</organism>
<gene>
    <name evidence="1" type="primary">yohO</name>
    <name type="ordered locus">b4542</name>
    <name type="ordered locus">JW5354</name>
</gene>
<comment type="subcellular location">
    <subcellularLocation>
        <location evidence="1">Cell inner membrane</location>
        <topology evidence="1">Single-pass membrane protein</topology>
    </subcellularLocation>
</comment>
<comment type="induction">
    <text evidence="2 3">Constitutively expressed (at protein level).</text>
</comment>
<comment type="similarity">
    <text evidence="1">Belongs to the UPF0387 family.</text>
</comment>
<name>YOHO_ECOLI</name>
<proteinExistence type="evidence at protein level"/>
<accession>Q2EES6</accession>
<accession>Q2MAV2</accession>
<evidence type="ECO:0000255" key="1">
    <source>
        <dbReference type="HAMAP-Rule" id="MF_01362"/>
    </source>
</evidence>
<evidence type="ECO:0000269" key="2">
    <source>
    </source>
</evidence>
<evidence type="ECO:0000269" key="3">
    <source>
    </source>
</evidence>